<sequence>MNSDANVDLTEIAKFEAIASRWWDMEGEFKPLHQINPVRLDWITDKSGGLFGKRILDIGCGGGILSESMARRGAHVTGIDMGKEPLGVARLHALEQGVELQYQQMTAEEHASQTPDQYDVVTCMEMLEHVPDPASVLRAIATLVRPGGRVFISTINRNPKAYLMMIIGAEYLMKMVPKGTHDHKKFITPAELCRMGEAAGLLVRDMSGVHYAPLSNQFKLGKNVDVNYMVEFIRPEHG</sequence>
<proteinExistence type="inferred from homology"/>
<reference key="1">
    <citation type="journal article" date="2008" name="BMC Genomics">
        <title>The genome of Aeromonas salmonicida subsp. salmonicida A449: insights into the evolution of a fish pathogen.</title>
        <authorList>
            <person name="Reith M.E."/>
            <person name="Singh R.K."/>
            <person name="Curtis B."/>
            <person name="Boyd J.M."/>
            <person name="Bouevitch A."/>
            <person name="Kimball J."/>
            <person name="Munholland J."/>
            <person name="Murphy C."/>
            <person name="Sarty D."/>
            <person name="Williams J."/>
            <person name="Nash J.H."/>
            <person name="Johnson S.C."/>
            <person name="Brown L.L."/>
        </authorList>
    </citation>
    <scope>NUCLEOTIDE SEQUENCE [LARGE SCALE GENOMIC DNA]</scope>
    <source>
        <strain>A449</strain>
    </source>
</reference>
<dbReference type="EC" id="2.1.1.222" evidence="1"/>
<dbReference type="EC" id="2.1.1.64" evidence="1"/>
<dbReference type="EMBL" id="CP000644">
    <property type="protein sequence ID" value="ABO90021.1"/>
    <property type="molecule type" value="Genomic_DNA"/>
</dbReference>
<dbReference type="RefSeq" id="WP_005315513.1">
    <property type="nucleotide sequence ID" value="NC_009348.1"/>
</dbReference>
<dbReference type="SMR" id="A4SM99"/>
<dbReference type="STRING" id="29491.GCA_000820065_03913"/>
<dbReference type="KEGG" id="asa:ASA_1948"/>
<dbReference type="PATRIC" id="fig|382245.13.peg.1932"/>
<dbReference type="eggNOG" id="COG2227">
    <property type="taxonomic scope" value="Bacteria"/>
</dbReference>
<dbReference type="HOGENOM" id="CLU_042432_5_0_6"/>
<dbReference type="UniPathway" id="UPA00232"/>
<dbReference type="Proteomes" id="UP000000225">
    <property type="component" value="Chromosome"/>
</dbReference>
<dbReference type="GO" id="GO:0102208">
    <property type="term" value="F:2-polyprenyl-6-hydroxyphenol methylase activity"/>
    <property type="evidence" value="ECO:0007669"/>
    <property type="project" value="UniProtKB-EC"/>
</dbReference>
<dbReference type="GO" id="GO:0061542">
    <property type="term" value="F:3-demethylubiquinol 3-O-methyltransferase activity"/>
    <property type="evidence" value="ECO:0007669"/>
    <property type="project" value="UniProtKB-UniRule"/>
</dbReference>
<dbReference type="GO" id="GO:0010420">
    <property type="term" value="F:polyprenyldihydroxybenzoate methyltransferase activity"/>
    <property type="evidence" value="ECO:0007669"/>
    <property type="project" value="InterPro"/>
</dbReference>
<dbReference type="GO" id="GO:0032259">
    <property type="term" value="P:methylation"/>
    <property type="evidence" value="ECO:0007669"/>
    <property type="project" value="UniProtKB-KW"/>
</dbReference>
<dbReference type="CDD" id="cd02440">
    <property type="entry name" value="AdoMet_MTases"/>
    <property type="match status" value="1"/>
</dbReference>
<dbReference type="FunFam" id="3.40.50.150:FF:000028">
    <property type="entry name" value="Ubiquinone biosynthesis O-methyltransferase"/>
    <property type="match status" value="1"/>
</dbReference>
<dbReference type="Gene3D" id="3.40.50.150">
    <property type="entry name" value="Vaccinia Virus protein VP39"/>
    <property type="match status" value="1"/>
</dbReference>
<dbReference type="HAMAP" id="MF_00472">
    <property type="entry name" value="UbiG"/>
    <property type="match status" value="1"/>
</dbReference>
<dbReference type="InterPro" id="IPR029063">
    <property type="entry name" value="SAM-dependent_MTases_sf"/>
</dbReference>
<dbReference type="InterPro" id="IPR010233">
    <property type="entry name" value="UbiG_MeTrfase"/>
</dbReference>
<dbReference type="NCBIfam" id="TIGR01983">
    <property type="entry name" value="UbiG"/>
    <property type="match status" value="1"/>
</dbReference>
<dbReference type="PANTHER" id="PTHR43464">
    <property type="entry name" value="METHYLTRANSFERASE"/>
    <property type="match status" value="1"/>
</dbReference>
<dbReference type="PANTHER" id="PTHR43464:SF19">
    <property type="entry name" value="UBIQUINONE BIOSYNTHESIS O-METHYLTRANSFERASE, MITOCHONDRIAL"/>
    <property type="match status" value="1"/>
</dbReference>
<dbReference type="Pfam" id="PF13489">
    <property type="entry name" value="Methyltransf_23"/>
    <property type="match status" value="1"/>
</dbReference>
<dbReference type="SUPFAM" id="SSF53335">
    <property type="entry name" value="S-adenosyl-L-methionine-dependent methyltransferases"/>
    <property type="match status" value="1"/>
</dbReference>
<accession>A4SM99</accession>
<evidence type="ECO:0000255" key="1">
    <source>
        <dbReference type="HAMAP-Rule" id="MF_00472"/>
    </source>
</evidence>
<gene>
    <name evidence="1" type="primary">ubiG</name>
    <name type="ordered locus">ASA_1948</name>
</gene>
<organism>
    <name type="scientific">Aeromonas salmonicida (strain A449)</name>
    <dbReference type="NCBI Taxonomy" id="382245"/>
    <lineage>
        <taxon>Bacteria</taxon>
        <taxon>Pseudomonadati</taxon>
        <taxon>Pseudomonadota</taxon>
        <taxon>Gammaproteobacteria</taxon>
        <taxon>Aeromonadales</taxon>
        <taxon>Aeromonadaceae</taxon>
        <taxon>Aeromonas</taxon>
    </lineage>
</organism>
<feature type="chain" id="PRO_1000013887" description="Ubiquinone biosynthesis O-methyltransferase">
    <location>
        <begin position="1"/>
        <end position="238"/>
    </location>
</feature>
<feature type="binding site" evidence="1">
    <location>
        <position position="39"/>
    </location>
    <ligand>
        <name>S-adenosyl-L-methionine</name>
        <dbReference type="ChEBI" id="CHEBI:59789"/>
    </ligand>
</feature>
<feature type="binding site" evidence="1">
    <location>
        <position position="59"/>
    </location>
    <ligand>
        <name>S-adenosyl-L-methionine</name>
        <dbReference type="ChEBI" id="CHEBI:59789"/>
    </ligand>
</feature>
<feature type="binding site" evidence="1">
    <location>
        <position position="80"/>
    </location>
    <ligand>
        <name>S-adenosyl-L-methionine</name>
        <dbReference type="ChEBI" id="CHEBI:59789"/>
    </ligand>
</feature>
<feature type="binding site" evidence="1">
    <location>
        <position position="124"/>
    </location>
    <ligand>
        <name>S-adenosyl-L-methionine</name>
        <dbReference type="ChEBI" id="CHEBI:59789"/>
    </ligand>
</feature>
<name>UBIG_AERS4</name>
<protein>
    <recommendedName>
        <fullName evidence="1">Ubiquinone biosynthesis O-methyltransferase</fullName>
    </recommendedName>
    <alternativeName>
        <fullName evidence="1">2-polyprenyl-6-hydroxyphenol methylase</fullName>
        <ecNumber evidence="1">2.1.1.222</ecNumber>
    </alternativeName>
    <alternativeName>
        <fullName evidence="1">3-demethylubiquinone 3-O-methyltransferase</fullName>
        <ecNumber evidence="1">2.1.1.64</ecNumber>
    </alternativeName>
</protein>
<comment type="function">
    <text evidence="1">O-methyltransferase that catalyzes the 2 O-methylation steps in the ubiquinone biosynthetic pathway.</text>
</comment>
<comment type="catalytic activity">
    <reaction evidence="1">
        <text>a 3-demethylubiquinol + S-adenosyl-L-methionine = a ubiquinol + S-adenosyl-L-homocysteine + H(+)</text>
        <dbReference type="Rhea" id="RHEA:44380"/>
        <dbReference type="Rhea" id="RHEA-COMP:9566"/>
        <dbReference type="Rhea" id="RHEA-COMP:10914"/>
        <dbReference type="ChEBI" id="CHEBI:15378"/>
        <dbReference type="ChEBI" id="CHEBI:17976"/>
        <dbReference type="ChEBI" id="CHEBI:57856"/>
        <dbReference type="ChEBI" id="CHEBI:59789"/>
        <dbReference type="ChEBI" id="CHEBI:84422"/>
        <dbReference type="EC" id="2.1.1.64"/>
    </reaction>
</comment>
<comment type="catalytic activity">
    <reaction evidence="1">
        <text>a 3-(all-trans-polyprenyl)benzene-1,2-diol + S-adenosyl-L-methionine = a 2-methoxy-6-(all-trans-polyprenyl)phenol + S-adenosyl-L-homocysteine + H(+)</text>
        <dbReference type="Rhea" id="RHEA:31411"/>
        <dbReference type="Rhea" id="RHEA-COMP:9550"/>
        <dbReference type="Rhea" id="RHEA-COMP:9551"/>
        <dbReference type="ChEBI" id="CHEBI:15378"/>
        <dbReference type="ChEBI" id="CHEBI:57856"/>
        <dbReference type="ChEBI" id="CHEBI:59789"/>
        <dbReference type="ChEBI" id="CHEBI:62729"/>
        <dbReference type="ChEBI" id="CHEBI:62731"/>
        <dbReference type="EC" id="2.1.1.222"/>
    </reaction>
</comment>
<comment type="pathway">
    <text evidence="1">Cofactor biosynthesis; ubiquinone biosynthesis.</text>
</comment>
<comment type="similarity">
    <text evidence="1">Belongs to the methyltransferase superfamily. UbiG/COQ3 family.</text>
</comment>
<keyword id="KW-0489">Methyltransferase</keyword>
<keyword id="KW-0949">S-adenosyl-L-methionine</keyword>
<keyword id="KW-0808">Transferase</keyword>
<keyword id="KW-0831">Ubiquinone biosynthesis</keyword>